<organism>
    <name type="scientific">Oceanobacillus iheyensis (strain DSM 14371 / CIP 107618 / JCM 11309 / KCTC 3954 / HTE831)</name>
    <dbReference type="NCBI Taxonomy" id="221109"/>
    <lineage>
        <taxon>Bacteria</taxon>
        <taxon>Bacillati</taxon>
        <taxon>Bacillota</taxon>
        <taxon>Bacilli</taxon>
        <taxon>Bacillales</taxon>
        <taxon>Bacillaceae</taxon>
        <taxon>Oceanobacillus</taxon>
    </lineage>
</organism>
<evidence type="ECO:0000255" key="1">
    <source>
        <dbReference type="HAMAP-Rule" id="MF_01345"/>
    </source>
</evidence>
<evidence type="ECO:0000305" key="2"/>
<name>RS17_OCEIH</name>
<protein>
    <recommendedName>
        <fullName evidence="1">Small ribosomal subunit protein uS17</fullName>
    </recommendedName>
    <alternativeName>
        <fullName evidence="2">30S ribosomal protein S17</fullName>
    </alternativeName>
</protein>
<reference key="1">
    <citation type="journal article" date="2002" name="Nucleic Acids Res.">
        <title>Genome sequence of Oceanobacillus iheyensis isolated from the Iheya Ridge and its unexpected adaptive capabilities to extreme environments.</title>
        <authorList>
            <person name="Takami H."/>
            <person name="Takaki Y."/>
            <person name="Uchiyama I."/>
        </authorList>
    </citation>
    <scope>NUCLEOTIDE SEQUENCE [LARGE SCALE GENOMIC DNA]</scope>
    <source>
        <strain>DSM 14371 / CIP 107618 / JCM 11309 / KCTC 3954 / HTE831</strain>
    </source>
</reference>
<sequence length="87" mass="10251">MTERNDRKVYTGRVVSDKMDKTITVLVETYKFHKLYGKRVKYSKKFKTHDENNVAKNGDVVRIMETRPLSATKRFRLVEVTEEAVII</sequence>
<comment type="function">
    <text evidence="1">One of the primary rRNA binding proteins, it binds specifically to the 5'-end of 16S ribosomal RNA.</text>
</comment>
<comment type="subunit">
    <text evidence="1">Part of the 30S ribosomal subunit.</text>
</comment>
<comment type="similarity">
    <text evidence="1">Belongs to the universal ribosomal protein uS17 family.</text>
</comment>
<feature type="chain" id="PRO_0000233525" description="Small ribosomal subunit protein uS17">
    <location>
        <begin position="1"/>
        <end position="87"/>
    </location>
</feature>
<keyword id="KW-1185">Reference proteome</keyword>
<keyword id="KW-0687">Ribonucleoprotein</keyword>
<keyword id="KW-0689">Ribosomal protein</keyword>
<keyword id="KW-0694">RNA-binding</keyword>
<keyword id="KW-0699">rRNA-binding</keyword>
<proteinExistence type="inferred from homology"/>
<accession>Q8ETX4</accession>
<gene>
    <name evidence="1" type="primary">rpsQ</name>
    <name type="ordered locus">OB0128</name>
</gene>
<dbReference type="EMBL" id="BA000028">
    <property type="protein sequence ID" value="BAC12084.1"/>
    <property type="molecule type" value="Genomic_DNA"/>
</dbReference>
<dbReference type="RefSeq" id="WP_011064531.1">
    <property type="nucleotide sequence ID" value="NC_004193.1"/>
</dbReference>
<dbReference type="SMR" id="Q8ETX4"/>
<dbReference type="STRING" id="221109.gene:10732318"/>
<dbReference type="KEGG" id="oih:OB0128"/>
<dbReference type="eggNOG" id="COG0186">
    <property type="taxonomic scope" value="Bacteria"/>
</dbReference>
<dbReference type="HOGENOM" id="CLU_073626_1_0_9"/>
<dbReference type="OrthoDB" id="9811714at2"/>
<dbReference type="PhylomeDB" id="Q8ETX4"/>
<dbReference type="Proteomes" id="UP000000822">
    <property type="component" value="Chromosome"/>
</dbReference>
<dbReference type="GO" id="GO:0022627">
    <property type="term" value="C:cytosolic small ribosomal subunit"/>
    <property type="evidence" value="ECO:0007669"/>
    <property type="project" value="TreeGrafter"/>
</dbReference>
<dbReference type="GO" id="GO:0019843">
    <property type="term" value="F:rRNA binding"/>
    <property type="evidence" value="ECO:0007669"/>
    <property type="project" value="UniProtKB-UniRule"/>
</dbReference>
<dbReference type="GO" id="GO:0003735">
    <property type="term" value="F:structural constituent of ribosome"/>
    <property type="evidence" value="ECO:0007669"/>
    <property type="project" value="InterPro"/>
</dbReference>
<dbReference type="GO" id="GO:0006412">
    <property type="term" value="P:translation"/>
    <property type="evidence" value="ECO:0007669"/>
    <property type="project" value="UniProtKB-UniRule"/>
</dbReference>
<dbReference type="CDD" id="cd00364">
    <property type="entry name" value="Ribosomal_uS17"/>
    <property type="match status" value="1"/>
</dbReference>
<dbReference type="FunFam" id="2.40.50.140:FF:000026">
    <property type="entry name" value="30S ribosomal protein S17"/>
    <property type="match status" value="1"/>
</dbReference>
<dbReference type="Gene3D" id="2.40.50.140">
    <property type="entry name" value="Nucleic acid-binding proteins"/>
    <property type="match status" value="1"/>
</dbReference>
<dbReference type="HAMAP" id="MF_01345_B">
    <property type="entry name" value="Ribosomal_uS17_B"/>
    <property type="match status" value="1"/>
</dbReference>
<dbReference type="InterPro" id="IPR012340">
    <property type="entry name" value="NA-bd_OB-fold"/>
</dbReference>
<dbReference type="InterPro" id="IPR000266">
    <property type="entry name" value="Ribosomal_uS17"/>
</dbReference>
<dbReference type="InterPro" id="IPR019984">
    <property type="entry name" value="Ribosomal_uS17_bact/chlr"/>
</dbReference>
<dbReference type="InterPro" id="IPR019979">
    <property type="entry name" value="Ribosomal_uS17_CS"/>
</dbReference>
<dbReference type="NCBIfam" id="NF004123">
    <property type="entry name" value="PRK05610.1"/>
    <property type="match status" value="1"/>
</dbReference>
<dbReference type="NCBIfam" id="TIGR03635">
    <property type="entry name" value="uS17_bact"/>
    <property type="match status" value="1"/>
</dbReference>
<dbReference type="PANTHER" id="PTHR10744">
    <property type="entry name" value="40S RIBOSOMAL PROTEIN S11 FAMILY MEMBER"/>
    <property type="match status" value="1"/>
</dbReference>
<dbReference type="PANTHER" id="PTHR10744:SF1">
    <property type="entry name" value="SMALL RIBOSOMAL SUBUNIT PROTEIN US17M"/>
    <property type="match status" value="1"/>
</dbReference>
<dbReference type="Pfam" id="PF00366">
    <property type="entry name" value="Ribosomal_S17"/>
    <property type="match status" value="1"/>
</dbReference>
<dbReference type="PRINTS" id="PR00973">
    <property type="entry name" value="RIBOSOMALS17"/>
</dbReference>
<dbReference type="SUPFAM" id="SSF50249">
    <property type="entry name" value="Nucleic acid-binding proteins"/>
    <property type="match status" value="1"/>
</dbReference>
<dbReference type="PROSITE" id="PS00056">
    <property type="entry name" value="RIBOSOMAL_S17"/>
    <property type="match status" value="1"/>
</dbReference>